<organism>
    <name type="scientific">Synechocystis sp. (strain ATCC 27184 / PCC 6803 / Kazusa)</name>
    <dbReference type="NCBI Taxonomy" id="1111708"/>
    <lineage>
        <taxon>Bacteria</taxon>
        <taxon>Bacillati</taxon>
        <taxon>Cyanobacteriota</taxon>
        <taxon>Cyanophyceae</taxon>
        <taxon>Synechococcales</taxon>
        <taxon>Merismopediaceae</taxon>
        <taxon>Synechocystis</taxon>
    </lineage>
</organism>
<keyword id="KW-0997">Cell inner membrane</keyword>
<keyword id="KW-1003">Cell membrane</keyword>
<keyword id="KW-0406">Ion transport</keyword>
<keyword id="KW-0472">Membrane</keyword>
<keyword id="KW-0630">Potassium</keyword>
<keyword id="KW-0633">Potassium transport</keyword>
<keyword id="KW-1185">Reference proteome</keyword>
<keyword id="KW-0812">Transmembrane</keyword>
<keyword id="KW-1133">Transmembrane helix</keyword>
<keyword id="KW-0813">Transport</keyword>
<dbReference type="EMBL" id="BA000022">
    <property type="protein sequence ID" value="BAA17928.1"/>
    <property type="molecule type" value="Genomic_DNA"/>
</dbReference>
<dbReference type="PIR" id="S75066">
    <property type="entry name" value="S75066"/>
</dbReference>
<dbReference type="SMR" id="P73866"/>
<dbReference type="IntAct" id="P73866">
    <property type="interactions" value="1"/>
</dbReference>
<dbReference type="STRING" id="1148.gene:10498797"/>
<dbReference type="PaxDb" id="1148-1653011"/>
<dbReference type="EnsemblBacteria" id="BAA17928">
    <property type="protein sequence ID" value="BAA17928"/>
    <property type="gene ID" value="BAA17928"/>
</dbReference>
<dbReference type="KEGG" id="syn:slr1728"/>
<dbReference type="eggNOG" id="COG2060">
    <property type="taxonomic scope" value="Bacteria"/>
</dbReference>
<dbReference type="InParanoid" id="P73866"/>
<dbReference type="PhylomeDB" id="P73866"/>
<dbReference type="BRENDA" id="7.2.2.6">
    <property type="organism ID" value="6192"/>
</dbReference>
<dbReference type="Proteomes" id="UP000001425">
    <property type="component" value="Chromosome"/>
</dbReference>
<dbReference type="GO" id="GO:0005886">
    <property type="term" value="C:plasma membrane"/>
    <property type="evidence" value="ECO:0000318"/>
    <property type="project" value="GO_Central"/>
</dbReference>
<dbReference type="GO" id="GO:0008556">
    <property type="term" value="F:P-type potassium transmembrane transporter activity"/>
    <property type="evidence" value="ECO:0000318"/>
    <property type="project" value="GO_Central"/>
</dbReference>
<dbReference type="GO" id="GO:0030955">
    <property type="term" value="F:potassium ion binding"/>
    <property type="evidence" value="ECO:0007669"/>
    <property type="project" value="UniProtKB-UniRule"/>
</dbReference>
<dbReference type="GO" id="GO:0071805">
    <property type="term" value="P:potassium ion transmembrane transport"/>
    <property type="evidence" value="ECO:0000318"/>
    <property type="project" value="GO_Central"/>
</dbReference>
<dbReference type="HAMAP" id="MF_00275">
    <property type="entry name" value="KdpA"/>
    <property type="match status" value="1"/>
</dbReference>
<dbReference type="InterPro" id="IPR004623">
    <property type="entry name" value="KdpA"/>
</dbReference>
<dbReference type="NCBIfam" id="TIGR00680">
    <property type="entry name" value="kdpA"/>
    <property type="match status" value="1"/>
</dbReference>
<dbReference type="PANTHER" id="PTHR30607">
    <property type="entry name" value="POTASSIUM-TRANSPORTING ATPASE A CHAIN"/>
    <property type="match status" value="1"/>
</dbReference>
<dbReference type="PANTHER" id="PTHR30607:SF2">
    <property type="entry name" value="POTASSIUM-TRANSPORTING ATPASE POTASSIUM-BINDING SUBUNIT"/>
    <property type="match status" value="1"/>
</dbReference>
<dbReference type="Pfam" id="PF03814">
    <property type="entry name" value="KdpA"/>
    <property type="match status" value="1"/>
</dbReference>
<dbReference type="PIRSF" id="PIRSF001294">
    <property type="entry name" value="K_ATPaseA"/>
    <property type="match status" value="1"/>
</dbReference>
<proteinExistence type="inferred from homology"/>
<accession>P73866</accession>
<sequence>MLQGFVQIALILAILVATAPLLGRYMARVFLGQSTWLDKIARPLESLIFAGSGITKHPSMGATQYVSAALISNLVMGVFVFLILMFQGSLPLNPTGLAAPSWDLALHTAISFVTNTNQQHYSGETTYTYFSQAGALGFLMFTSAATGIAVAIAFIRGLTGQAIGNFYQDLVLSITRILLPISLVGAILLLVAGVPETLAGPAQVTTLEGATQWIARGPVAHFEIIKELGENGGGFFGINSAHPFENPNNFANLLETVIMMVIPAGLIITYGIMAGNPEQGWLIFWMVFILYGILIAIAAVGEFQGNPLINQILGETQPNLEGKEVRFGWVLTALWAVSTTGTMCGAVNGMHDSLMPPGGFVTLSDLFLQIIWGGQGTGTAYLFVFLILTVFLTGLMVGRTPEFLGRKIEKREIVLASLILLIHPIAILIPTAITLAFPDTLAGISNPGFHGISQVAYEYASAAANNGSGFEGLADNTLWWNLSASFSLIAGRYVPIVALIFLADGMARKQPVPETSGTLHTDTTLFTGITAGAIIILGALTFLPILVLGPVAEAFNLV</sequence>
<reference key="1">
    <citation type="journal article" date="1996" name="DNA Res.">
        <title>Sequence analysis of the genome of the unicellular cyanobacterium Synechocystis sp. strain PCC6803. II. Sequence determination of the entire genome and assignment of potential protein-coding regions.</title>
        <authorList>
            <person name="Kaneko T."/>
            <person name="Sato S."/>
            <person name="Kotani H."/>
            <person name="Tanaka A."/>
            <person name="Asamizu E."/>
            <person name="Nakamura Y."/>
            <person name="Miyajima N."/>
            <person name="Hirosawa M."/>
            <person name="Sugiura M."/>
            <person name="Sasamoto S."/>
            <person name="Kimura T."/>
            <person name="Hosouchi T."/>
            <person name="Matsuno A."/>
            <person name="Muraki A."/>
            <person name="Nakazaki N."/>
            <person name="Naruo K."/>
            <person name="Okumura S."/>
            <person name="Shimpo S."/>
            <person name="Takeuchi C."/>
            <person name="Wada T."/>
            <person name="Watanabe A."/>
            <person name="Yamada M."/>
            <person name="Yasuda M."/>
            <person name="Tabata S."/>
        </authorList>
    </citation>
    <scope>NUCLEOTIDE SEQUENCE [LARGE SCALE GENOMIC DNA]</scope>
    <source>
        <strain>ATCC 27184 / PCC 6803 / Kazusa</strain>
    </source>
</reference>
<protein>
    <recommendedName>
        <fullName evidence="1">Potassium-transporting ATPase potassium-binding subunit</fullName>
    </recommendedName>
    <alternativeName>
        <fullName evidence="1">ATP phosphohydrolase [potassium-transporting] A chain</fullName>
    </alternativeName>
    <alternativeName>
        <fullName evidence="1">Potassium-binding and translocating subunit A</fullName>
    </alternativeName>
    <alternativeName>
        <fullName evidence="1">Potassium-translocating ATPase A chain</fullName>
    </alternativeName>
</protein>
<evidence type="ECO:0000255" key="1">
    <source>
        <dbReference type="HAMAP-Rule" id="MF_00275"/>
    </source>
</evidence>
<gene>
    <name evidence="1" type="primary">kdpA</name>
    <name type="ordered locus">slr1728</name>
</gene>
<feature type="chain" id="PRO_0000166537" description="Potassium-transporting ATPase potassium-binding subunit">
    <location>
        <begin position="1"/>
        <end position="558"/>
    </location>
</feature>
<feature type="transmembrane region" description="Helical" evidence="1">
    <location>
        <begin position="2"/>
        <end position="22"/>
    </location>
</feature>
<feature type="transmembrane region" description="Helical" evidence="1">
    <location>
        <begin position="66"/>
        <end position="86"/>
    </location>
</feature>
<feature type="transmembrane region" description="Helical" evidence="1">
    <location>
        <begin position="135"/>
        <end position="155"/>
    </location>
</feature>
<feature type="transmembrane region" description="Helical" evidence="1">
    <location>
        <begin position="177"/>
        <end position="197"/>
    </location>
</feature>
<feature type="transmembrane region" description="Helical" evidence="1">
    <location>
        <begin position="253"/>
        <end position="273"/>
    </location>
</feature>
<feature type="transmembrane region" description="Helical" evidence="1">
    <location>
        <begin position="280"/>
        <end position="300"/>
    </location>
</feature>
<feature type="transmembrane region" description="Helical" evidence="1">
    <location>
        <begin position="327"/>
        <end position="347"/>
    </location>
</feature>
<feature type="transmembrane region" description="Helical" evidence="1">
    <location>
        <begin position="354"/>
        <end position="374"/>
    </location>
</feature>
<feature type="transmembrane region" description="Helical" evidence="1">
    <location>
        <begin position="378"/>
        <end position="398"/>
    </location>
</feature>
<feature type="transmembrane region" description="Helical" evidence="1">
    <location>
        <begin position="413"/>
        <end position="433"/>
    </location>
</feature>
<feature type="transmembrane region" description="Helical" evidence="1">
    <location>
        <begin position="482"/>
        <end position="502"/>
    </location>
</feature>
<feature type="transmembrane region" description="Helical" evidence="1">
    <location>
        <begin position="528"/>
        <end position="548"/>
    </location>
</feature>
<comment type="function">
    <text evidence="1">Part of the high-affinity ATP-driven potassium transport (or Kdp) system, which catalyzes the hydrolysis of ATP coupled with the electrogenic transport of potassium into the cytoplasm. This subunit binds the periplasmic potassium ions and delivers the ions to the membrane domain of KdpB through an intramembrane tunnel.</text>
</comment>
<comment type="subunit">
    <text evidence="1">The system is composed of three essential subunits: KdpA, KdpB and KdpC.</text>
</comment>
<comment type="subcellular location">
    <subcellularLocation>
        <location evidence="1">Cell inner membrane</location>
        <topology evidence="1">Multi-pass membrane protein</topology>
    </subcellularLocation>
</comment>
<comment type="similarity">
    <text evidence="1">Belongs to the KdpA family.</text>
</comment>
<name>KDPA_SYNY3</name>